<sequence>MTDTAENQTPNDRQAGHPRSIRSFVLRQSHMTAAQQRAIDTLWDSFGIDYQATPADLDARFGSSRPKILEIGFGMGMASAEIARRLPETDFLAIDVHGPGVGNLLKLINENHLENIRVMRHDAVEVVKNMLQDGSLDGIHIFFPDPWHKKRHHKRRLIQAPFIAKLLPKLKTGGYIHLATDWEEYAQQMLEVLSSFDSLQNTAADYAPTPDYRPETKFEARGKRLGHGVWDLVFKRIG</sequence>
<evidence type="ECO:0000250" key="1"/>
<evidence type="ECO:0000255" key="2">
    <source>
        <dbReference type="HAMAP-Rule" id="MF_01057"/>
    </source>
</evidence>
<evidence type="ECO:0000256" key="3">
    <source>
        <dbReference type="SAM" id="MobiDB-lite"/>
    </source>
</evidence>
<organism>
    <name type="scientific">Neisseria gonorrhoeae (strain NCCP11945)</name>
    <dbReference type="NCBI Taxonomy" id="521006"/>
    <lineage>
        <taxon>Bacteria</taxon>
        <taxon>Pseudomonadati</taxon>
        <taxon>Pseudomonadota</taxon>
        <taxon>Betaproteobacteria</taxon>
        <taxon>Neisseriales</taxon>
        <taxon>Neisseriaceae</taxon>
        <taxon>Neisseria</taxon>
    </lineage>
</organism>
<accession>B4RMI6</accession>
<name>TRMB_NEIG2</name>
<gene>
    <name evidence="2" type="primary">trmB</name>
    <name type="ordered locus">NGK_1346</name>
</gene>
<feature type="chain" id="PRO_1000136358" description="tRNA (guanine-N(7)-)-methyltransferase">
    <location>
        <begin position="1"/>
        <end position="238"/>
    </location>
</feature>
<feature type="region of interest" description="Disordered" evidence="3">
    <location>
        <begin position="1"/>
        <end position="20"/>
    </location>
</feature>
<feature type="compositionally biased region" description="Polar residues" evidence="3">
    <location>
        <begin position="1"/>
        <end position="12"/>
    </location>
</feature>
<feature type="active site" evidence="1">
    <location>
        <position position="145"/>
    </location>
</feature>
<feature type="binding site" evidence="2">
    <location>
        <position position="70"/>
    </location>
    <ligand>
        <name>S-adenosyl-L-methionine</name>
        <dbReference type="ChEBI" id="CHEBI:59789"/>
    </ligand>
</feature>
<feature type="binding site" evidence="2">
    <location>
        <position position="95"/>
    </location>
    <ligand>
        <name>S-adenosyl-L-methionine</name>
        <dbReference type="ChEBI" id="CHEBI:59789"/>
    </ligand>
</feature>
<feature type="binding site" evidence="2">
    <location>
        <position position="122"/>
    </location>
    <ligand>
        <name>S-adenosyl-L-methionine</name>
        <dbReference type="ChEBI" id="CHEBI:59789"/>
    </ligand>
</feature>
<feature type="binding site" evidence="2">
    <location>
        <position position="145"/>
    </location>
    <ligand>
        <name>S-adenosyl-L-methionine</name>
        <dbReference type="ChEBI" id="CHEBI:59789"/>
    </ligand>
</feature>
<feature type="binding site" evidence="2">
    <location>
        <position position="149"/>
    </location>
    <ligand>
        <name>substrate</name>
    </ligand>
</feature>
<feature type="binding site" evidence="2">
    <location>
        <position position="181"/>
    </location>
    <ligand>
        <name>substrate</name>
    </ligand>
</feature>
<feature type="binding site" evidence="2">
    <location>
        <begin position="216"/>
        <end position="219"/>
    </location>
    <ligand>
        <name>substrate</name>
    </ligand>
</feature>
<comment type="function">
    <text evidence="2">Catalyzes the formation of N(7)-methylguanine at position 46 (m7G46) in tRNA.</text>
</comment>
<comment type="catalytic activity">
    <reaction evidence="2">
        <text>guanosine(46) in tRNA + S-adenosyl-L-methionine = N(7)-methylguanosine(46) in tRNA + S-adenosyl-L-homocysteine</text>
        <dbReference type="Rhea" id="RHEA:42708"/>
        <dbReference type="Rhea" id="RHEA-COMP:10188"/>
        <dbReference type="Rhea" id="RHEA-COMP:10189"/>
        <dbReference type="ChEBI" id="CHEBI:57856"/>
        <dbReference type="ChEBI" id="CHEBI:59789"/>
        <dbReference type="ChEBI" id="CHEBI:74269"/>
        <dbReference type="ChEBI" id="CHEBI:74480"/>
        <dbReference type="EC" id="2.1.1.33"/>
    </reaction>
</comment>
<comment type="pathway">
    <text evidence="2">tRNA modification; N(7)-methylguanine-tRNA biosynthesis.</text>
</comment>
<comment type="similarity">
    <text evidence="2">Belongs to the class I-like SAM-binding methyltransferase superfamily. TrmB family.</text>
</comment>
<protein>
    <recommendedName>
        <fullName evidence="2">tRNA (guanine-N(7)-)-methyltransferase</fullName>
        <ecNumber evidence="2">2.1.1.33</ecNumber>
    </recommendedName>
    <alternativeName>
        <fullName evidence="2">tRNA (guanine(46)-N(7))-methyltransferase</fullName>
    </alternativeName>
    <alternativeName>
        <fullName evidence="2">tRNA(m7G46)-methyltransferase</fullName>
    </alternativeName>
</protein>
<reference key="1">
    <citation type="journal article" date="2008" name="J. Bacteriol.">
        <title>Complete genome sequence of Neisseria gonorrhoeae NCCP11945.</title>
        <authorList>
            <person name="Chung G.T."/>
            <person name="Yoo J.S."/>
            <person name="Oh H.B."/>
            <person name="Lee Y.S."/>
            <person name="Cha S.H."/>
            <person name="Kim S.J."/>
            <person name="Yoo C.K."/>
        </authorList>
    </citation>
    <scope>NUCLEOTIDE SEQUENCE [LARGE SCALE GENOMIC DNA]</scope>
    <source>
        <strain>NCCP11945</strain>
    </source>
</reference>
<dbReference type="EC" id="2.1.1.33" evidence="2"/>
<dbReference type="EMBL" id="CP001050">
    <property type="protein sequence ID" value="ACF30020.1"/>
    <property type="molecule type" value="Genomic_DNA"/>
</dbReference>
<dbReference type="RefSeq" id="WP_003691335.1">
    <property type="nucleotide sequence ID" value="NC_011035.1"/>
</dbReference>
<dbReference type="SMR" id="B4RMI6"/>
<dbReference type="GeneID" id="66752916"/>
<dbReference type="KEGG" id="ngk:NGK_1346"/>
<dbReference type="HOGENOM" id="CLU_050910_0_1_4"/>
<dbReference type="UniPathway" id="UPA00989"/>
<dbReference type="Proteomes" id="UP000002564">
    <property type="component" value="Chromosome"/>
</dbReference>
<dbReference type="GO" id="GO:0043527">
    <property type="term" value="C:tRNA methyltransferase complex"/>
    <property type="evidence" value="ECO:0007669"/>
    <property type="project" value="TreeGrafter"/>
</dbReference>
<dbReference type="GO" id="GO:0008176">
    <property type="term" value="F:tRNA (guanine(46)-N7)-methyltransferase activity"/>
    <property type="evidence" value="ECO:0007669"/>
    <property type="project" value="UniProtKB-UniRule"/>
</dbReference>
<dbReference type="CDD" id="cd02440">
    <property type="entry name" value="AdoMet_MTases"/>
    <property type="match status" value="1"/>
</dbReference>
<dbReference type="FunFam" id="3.40.50.150:FF:000035">
    <property type="entry name" value="tRNA (guanine-N(7)-)-methyltransferase"/>
    <property type="match status" value="1"/>
</dbReference>
<dbReference type="Gene3D" id="3.40.50.150">
    <property type="entry name" value="Vaccinia Virus protein VP39"/>
    <property type="match status" value="1"/>
</dbReference>
<dbReference type="HAMAP" id="MF_01057">
    <property type="entry name" value="tRNA_methyltr_TrmB"/>
    <property type="match status" value="1"/>
</dbReference>
<dbReference type="InterPro" id="IPR029063">
    <property type="entry name" value="SAM-dependent_MTases_sf"/>
</dbReference>
<dbReference type="InterPro" id="IPR003358">
    <property type="entry name" value="tRNA_(Gua-N-7)_MeTrfase_Trmb"/>
</dbReference>
<dbReference type="InterPro" id="IPR055361">
    <property type="entry name" value="tRNA_methyltr_TrmB_bact"/>
</dbReference>
<dbReference type="NCBIfam" id="TIGR00091">
    <property type="entry name" value="tRNA (guanosine(46)-N7)-methyltransferase TrmB"/>
    <property type="match status" value="1"/>
</dbReference>
<dbReference type="PANTHER" id="PTHR23417">
    <property type="entry name" value="3-DEOXY-D-MANNO-OCTULOSONIC-ACID TRANSFERASE/TRNA GUANINE-N 7 - -METHYLTRANSFERASE"/>
    <property type="match status" value="1"/>
</dbReference>
<dbReference type="PANTHER" id="PTHR23417:SF14">
    <property type="entry name" value="PENTACOTRIPEPTIDE-REPEAT REGION OF PRORP DOMAIN-CONTAINING PROTEIN"/>
    <property type="match status" value="1"/>
</dbReference>
<dbReference type="Pfam" id="PF02390">
    <property type="entry name" value="Methyltransf_4"/>
    <property type="match status" value="1"/>
</dbReference>
<dbReference type="SUPFAM" id="SSF53335">
    <property type="entry name" value="S-adenosyl-L-methionine-dependent methyltransferases"/>
    <property type="match status" value="1"/>
</dbReference>
<dbReference type="PROSITE" id="PS51625">
    <property type="entry name" value="SAM_MT_TRMB"/>
    <property type="match status" value="1"/>
</dbReference>
<proteinExistence type="inferred from homology"/>
<keyword id="KW-0489">Methyltransferase</keyword>
<keyword id="KW-0949">S-adenosyl-L-methionine</keyword>
<keyword id="KW-0808">Transferase</keyword>
<keyword id="KW-0819">tRNA processing</keyword>